<organism>
    <name type="scientific">Salmonella paratyphi A (strain AKU_12601)</name>
    <dbReference type="NCBI Taxonomy" id="554290"/>
    <lineage>
        <taxon>Bacteria</taxon>
        <taxon>Pseudomonadati</taxon>
        <taxon>Pseudomonadota</taxon>
        <taxon>Gammaproteobacteria</taxon>
        <taxon>Enterobacterales</taxon>
        <taxon>Enterobacteriaceae</taxon>
        <taxon>Salmonella</taxon>
    </lineage>
</organism>
<dbReference type="EC" id="3.6.1.73" evidence="1"/>
<dbReference type="EMBL" id="FM200053">
    <property type="protein sequence ID" value="CAR62376.1"/>
    <property type="molecule type" value="Genomic_DNA"/>
</dbReference>
<dbReference type="RefSeq" id="WP_000554315.1">
    <property type="nucleotide sequence ID" value="NC_011147.1"/>
</dbReference>
<dbReference type="SMR" id="B5BAL0"/>
<dbReference type="KEGG" id="sek:SSPA4079"/>
<dbReference type="HOGENOM" id="CLU_087417_1_0_6"/>
<dbReference type="Proteomes" id="UP000001869">
    <property type="component" value="Chromosome"/>
</dbReference>
<dbReference type="GO" id="GO:0103023">
    <property type="term" value="F:ITPase activity"/>
    <property type="evidence" value="ECO:0007669"/>
    <property type="project" value="UniProtKB-EC"/>
</dbReference>
<dbReference type="GO" id="GO:0046872">
    <property type="term" value="F:metal ion binding"/>
    <property type="evidence" value="ECO:0007669"/>
    <property type="project" value="UniProtKB-KW"/>
</dbReference>
<dbReference type="GO" id="GO:0000166">
    <property type="term" value="F:nucleotide binding"/>
    <property type="evidence" value="ECO:0007669"/>
    <property type="project" value="UniProtKB-KW"/>
</dbReference>
<dbReference type="GO" id="GO:0017111">
    <property type="term" value="F:ribonucleoside triphosphate phosphatase activity"/>
    <property type="evidence" value="ECO:0000250"/>
    <property type="project" value="UniProtKB"/>
</dbReference>
<dbReference type="GO" id="GO:0009117">
    <property type="term" value="P:nucleotide metabolic process"/>
    <property type="evidence" value="ECO:0007669"/>
    <property type="project" value="UniProtKB-KW"/>
</dbReference>
<dbReference type="GO" id="GO:0006772">
    <property type="term" value="P:thiamine metabolic process"/>
    <property type="evidence" value="ECO:0007669"/>
    <property type="project" value="TreeGrafter"/>
</dbReference>
<dbReference type="FunFam" id="3.90.950.10:FF:000002">
    <property type="entry name" value="Inosine/xanthosine triphosphatase"/>
    <property type="match status" value="1"/>
</dbReference>
<dbReference type="Gene3D" id="3.90.950.10">
    <property type="match status" value="1"/>
</dbReference>
<dbReference type="HAMAP" id="MF_00648">
    <property type="entry name" value="Non_canon_purine_NTPase_YjjX"/>
    <property type="match status" value="1"/>
</dbReference>
<dbReference type="InterPro" id="IPR029001">
    <property type="entry name" value="ITPase-like_fam"/>
</dbReference>
<dbReference type="InterPro" id="IPR002786">
    <property type="entry name" value="Non_canon_purine_NTPase"/>
</dbReference>
<dbReference type="InterPro" id="IPR026533">
    <property type="entry name" value="NTPase/PRRC1"/>
</dbReference>
<dbReference type="InterPro" id="IPR050299">
    <property type="entry name" value="YjjX_NTPase"/>
</dbReference>
<dbReference type="NCBIfam" id="TIGR00258">
    <property type="entry name" value="inosine/xanthosine triphosphatase"/>
    <property type="match status" value="1"/>
</dbReference>
<dbReference type="NCBIfam" id="NF003459">
    <property type="entry name" value="PRK05074.1"/>
    <property type="match status" value="1"/>
</dbReference>
<dbReference type="PANTHER" id="PTHR34699">
    <property type="match status" value="1"/>
</dbReference>
<dbReference type="PANTHER" id="PTHR34699:SF2">
    <property type="entry name" value="NON-CANONICAL PURINE NTP PHOSPHATASE_PRRC1 DOMAIN-CONTAINING PROTEIN"/>
    <property type="match status" value="1"/>
</dbReference>
<dbReference type="Pfam" id="PF01931">
    <property type="entry name" value="NTPase_I-T"/>
    <property type="match status" value="1"/>
</dbReference>
<dbReference type="SUPFAM" id="SSF52972">
    <property type="entry name" value="ITPase-like"/>
    <property type="match status" value="1"/>
</dbReference>
<protein>
    <recommendedName>
        <fullName evidence="1">Inosine/xanthosine triphosphatase</fullName>
        <shortName evidence="1">ITPase/XTPase</shortName>
        <ecNumber evidence="1">3.6.1.73</ecNumber>
    </recommendedName>
    <alternativeName>
        <fullName evidence="1">Non-canonical purine NTP phosphatase</fullName>
    </alternativeName>
    <alternativeName>
        <fullName evidence="1">Non-standard purine NTP phosphatase</fullName>
    </alternativeName>
    <alternativeName>
        <fullName evidence="1">Nucleoside-triphosphate phosphatase</fullName>
        <shortName evidence="1">NTPase</shortName>
    </alternativeName>
</protein>
<proteinExistence type="inferred from homology"/>
<name>NCPP_SALPK</name>
<reference key="1">
    <citation type="journal article" date="2009" name="BMC Genomics">
        <title>Pseudogene accumulation in the evolutionary histories of Salmonella enterica serovars Paratyphi A and Typhi.</title>
        <authorList>
            <person name="Holt K.E."/>
            <person name="Thomson N.R."/>
            <person name="Wain J."/>
            <person name="Langridge G.C."/>
            <person name="Hasan R."/>
            <person name="Bhutta Z.A."/>
            <person name="Quail M.A."/>
            <person name="Norbertczak H."/>
            <person name="Walker D."/>
            <person name="Simmonds M."/>
            <person name="White B."/>
            <person name="Bason N."/>
            <person name="Mungall K."/>
            <person name="Dougan G."/>
            <person name="Parkhill J."/>
        </authorList>
    </citation>
    <scope>NUCLEOTIDE SEQUENCE [LARGE SCALE GENOMIC DNA]</scope>
    <source>
        <strain>AKU_12601</strain>
    </source>
</reference>
<sequence>MHQVISATTNPAKIQAILQAFEEIFGEGSCHITPVAVESGVPEQPFGSEETRAGARNRVGNARRLHPQADFWVAIEAGIDDDATFSWVVIDNGVQRGEARSATLPLPAVILDRVRQGEALGPVMSQYTGIDEIGRKEGAIGVFTAGKLTRSSVYYQAVILALSPFHNAVYR</sequence>
<gene>
    <name type="primary">yjjX</name>
    <name type="ordered locus">SSPA4079</name>
</gene>
<accession>B5BAL0</accession>
<keyword id="KW-0378">Hydrolase</keyword>
<keyword id="KW-0460">Magnesium</keyword>
<keyword id="KW-0464">Manganese</keyword>
<keyword id="KW-0479">Metal-binding</keyword>
<keyword id="KW-0546">Nucleotide metabolism</keyword>
<keyword id="KW-0547">Nucleotide-binding</keyword>
<evidence type="ECO:0000255" key="1">
    <source>
        <dbReference type="HAMAP-Rule" id="MF_00648"/>
    </source>
</evidence>
<comment type="function">
    <text evidence="1">Phosphatase that hydrolyzes non-canonical purine nucleotides such as XTP and ITP to their respective diphosphate derivatives. Probably excludes non-canonical purines from DNA/RNA precursor pool, thus preventing their incorporation into DNA/RNA and avoiding chromosomal lesions.</text>
</comment>
<comment type="catalytic activity">
    <reaction evidence="1">
        <text>XTP + H2O = XDP + phosphate + H(+)</text>
        <dbReference type="Rhea" id="RHEA:28406"/>
        <dbReference type="ChEBI" id="CHEBI:15377"/>
        <dbReference type="ChEBI" id="CHEBI:15378"/>
        <dbReference type="ChEBI" id="CHEBI:43474"/>
        <dbReference type="ChEBI" id="CHEBI:59884"/>
        <dbReference type="ChEBI" id="CHEBI:61314"/>
        <dbReference type="EC" id="3.6.1.73"/>
    </reaction>
</comment>
<comment type="catalytic activity">
    <reaction evidence="1">
        <text>ITP + H2O = IDP + phosphate + H(+)</text>
        <dbReference type="Rhea" id="RHEA:28330"/>
        <dbReference type="ChEBI" id="CHEBI:15377"/>
        <dbReference type="ChEBI" id="CHEBI:15378"/>
        <dbReference type="ChEBI" id="CHEBI:43474"/>
        <dbReference type="ChEBI" id="CHEBI:58280"/>
        <dbReference type="ChEBI" id="CHEBI:61402"/>
        <dbReference type="EC" id="3.6.1.73"/>
    </reaction>
</comment>
<comment type="cofactor">
    <cofactor evidence="1">
        <name>Mg(2+)</name>
        <dbReference type="ChEBI" id="CHEBI:18420"/>
    </cofactor>
    <cofactor evidence="1">
        <name>Mn(2+)</name>
        <dbReference type="ChEBI" id="CHEBI:29035"/>
    </cofactor>
    <text evidence="1">Binds 1 divalent metal cation per subunit; can use either Mg(2+) or Mn(2+).</text>
</comment>
<comment type="subunit">
    <text evidence="1">Homodimer.</text>
</comment>
<comment type="similarity">
    <text evidence="1">Belongs to the YjjX NTPase family.</text>
</comment>
<feature type="chain" id="PRO_1000130948" description="Inosine/xanthosine triphosphatase">
    <location>
        <begin position="1"/>
        <end position="171"/>
    </location>
</feature>
<feature type="binding site" evidence="1">
    <location>
        <begin position="8"/>
        <end position="13"/>
    </location>
    <ligand>
        <name>substrate</name>
    </ligand>
</feature>
<feature type="binding site" evidence="1">
    <location>
        <position position="38"/>
    </location>
    <ligand>
        <name>Mg(2+)</name>
        <dbReference type="ChEBI" id="CHEBI:18420"/>
    </ligand>
</feature>
<feature type="binding site" evidence="1">
    <location>
        <position position="68"/>
    </location>
    <ligand>
        <name>Mg(2+)</name>
        <dbReference type="ChEBI" id="CHEBI:18420"/>
    </ligand>
</feature>